<organism>
    <name type="scientific">Pseudomonas syringae pv. tomato (strain ATCC BAA-871 / DC3000)</name>
    <dbReference type="NCBI Taxonomy" id="223283"/>
    <lineage>
        <taxon>Bacteria</taxon>
        <taxon>Pseudomonadati</taxon>
        <taxon>Pseudomonadota</taxon>
        <taxon>Gammaproteobacteria</taxon>
        <taxon>Pseudomonadales</taxon>
        <taxon>Pseudomonadaceae</taxon>
        <taxon>Pseudomonas</taxon>
    </lineage>
</organism>
<dbReference type="EC" id="7.6.2.14" evidence="1"/>
<dbReference type="EMBL" id="AE016853">
    <property type="protein sequence ID" value="AAO58740.1"/>
    <property type="molecule type" value="Genomic_DNA"/>
</dbReference>
<dbReference type="RefSeq" id="NP_795045.1">
    <property type="nucleotide sequence ID" value="NC_004578.1"/>
</dbReference>
<dbReference type="RefSeq" id="WP_011105420.1">
    <property type="nucleotide sequence ID" value="NC_004578.1"/>
</dbReference>
<dbReference type="SMR" id="Q87UI3"/>
<dbReference type="STRING" id="223283.PSPTO_5314"/>
<dbReference type="GeneID" id="1186999"/>
<dbReference type="KEGG" id="pst:PSPTO_5314"/>
<dbReference type="PATRIC" id="fig|223283.9.peg.5441"/>
<dbReference type="eggNOG" id="COG1116">
    <property type="taxonomic scope" value="Bacteria"/>
</dbReference>
<dbReference type="HOGENOM" id="CLU_000604_1_22_6"/>
<dbReference type="OrthoDB" id="9802264at2"/>
<dbReference type="PhylomeDB" id="Q87UI3"/>
<dbReference type="Proteomes" id="UP000002515">
    <property type="component" value="Chromosome"/>
</dbReference>
<dbReference type="GO" id="GO:0005886">
    <property type="term" value="C:plasma membrane"/>
    <property type="evidence" value="ECO:0007669"/>
    <property type="project" value="UniProtKB-SubCell"/>
</dbReference>
<dbReference type="GO" id="GO:0005524">
    <property type="term" value="F:ATP binding"/>
    <property type="evidence" value="ECO:0007669"/>
    <property type="project" value="UniProtKB-KW"/>
</dbReference>
<dbReference type="GO" id="GO:0016887">
    <property type="term" value="F:ATP hydrolysis activity"/>
    <property type="evidence" value="ECO:0007669"/>
    <property type="project" value="InterPro"/>
</dbReference>
<dbReference type="CDD" id="cd03293">
    <property type="entry name" value="ABC_NrtD_SsuB_transporters"/>
    <property type="match status" value="1"/>
</dbReference>
<dbReference type="FunFam" id="3.40.50.300:FF:000653">
    <property type="entry name" value="Aliphatic sulfonates import ATP-binding protein SsuB"/>
    <property type="match status" value="1"/>
</dbReference>
<dbReference type="Gene3D" id="3.40.50.300">
    <property type="entry name" value="P-loop containing nucleotide triphosphate hydrolases"/>
    <property type="match status" value="1"/>
</dbReference>
<dbReference type="InterPro" id="IPR003593">
    <property type="entry name" value="AAA+_ATPase"/>
</dbReference>
<dbReference type="InterPro" id="IPR003439">
    <property type="entry name" value="ABC_transporter-like_ATP-bd"/>
</dbReference>
<dbReference type="InterPro" id="IPR017871">
    <property type="entry name" value="ABC_transporter-like_CS"/>
</dbReference>
<dbReference type="InterPro" id="IPR050166">
    <property type="entry name" value="ABC_transporter_ATP-bind"/>
</dbReference>
<dbReference type="InterPro" id="IPR027417">
    <property type="entry name" value="P-loop_NTPase"/>
</dbReference>
<dbReference type="NCBIfam" id="NF008420">
    <property type="entry name" value="PRK11247.1"/>
    <property type="match status" value="1"/>
</dbReference>
<dbReference type="PANTHER" id="PTHR42788:SF17">
    <property type="entry name" value="ALIPHATIC SULFONATES IMPORT ATP-BINDING PROTEIN SSUB"/>
    <property type="match status" value="1"/>
</dbReference>
<dbReference type="PANTHER" id="PTHR42788">
    <property type="entry name" value="TAURINE IMPORT ATP-BINDING PROTEIN-RELATED"/>
    <property type="match status" value="1"/>
</dbReference>
<dbReference type="Pfam" id="PF00005">
    <property type="entry name" value="ABC_tran"/>
    <property type="match status" value="1"/>
</dbReference>
<dbReference type="SMART" id="SM00382">
    <property type="entry name" value="AAA"/>
    <property type="match status" value="1"/>
</dbReference>
<dbReference type="SUPFAM" id="SSF52540">
    <property type="entry name" value="P-loop containing nucleoside triphosphate hydrolases"/>
    <property type="match status" value="1"/>
</dbReference>
<dbReference type="PROSITE" id="PS00211">
    <property type="entry name" value="ABC_TRANSPORTER_1"/>
    <property type="match status" value="1"/>
</dbReference>
<dbReference type="PROSITE" id="PS50893">
    <property type="entry name" value="ABC_TRANSPORTER_2"/>
    <property type="match status" value="1"/>
</dbReference>
<dbReference type="PROSITE" id="PS51291">
    <property type="entry name" value="SSUB"/>
    <property type="match status" value="1"/>
</dbReference>
<keyword id="KW-0067">ATP-binding</keyword>
<keyword id="KW-0997">Cell inner membrane</keyword>
<keyword id="KW-1003">Cell membrane</keyword>
<keyword id="KW-0472">Membrane</keyword>
<keyword id="KW-0547">Nucleotide-binding</keyword>
<keyword id="KW-1185">Reference proteome</keyword>
<keyword id="KW-1278">Translocase</keyword>
<keyword id="KW-0813">Transport</keyword>
<accession>Q87UI3</accession>
<reference key="1">
    <citation type="journal article" date="2003" name="Proc. Natl. Acad. Sci. U.S.A.">
        <title>The complete genome sequence of the Arabidopsis and tomato pathogen Pseudomonas syringae pv. tomato DC3000.</title>
        <authorList>
            <person name="Buell C.R."/>
            <person name="Joardar V."/>
            <person name="Lindeberg M."/>
            <person name="Selengut J."/>
            <person name="Paulsen I.T."/>
            <person name="Gwinn M.L."/>
            <person name="Dodson R.J."/>
            <person name="DeBoy R.T."/>
            <person name="Durkin A.S."/>
            <person name="Kolonay J.F."/>
            <person name="Madupu R."/>
            <person name="Daugherty S.C."/>
            <person name="Brinkac L.M."/>
            <person name="Beanan M.J."/>
            <person name="Haft D.H."/>
            <person name="Nelson W.C."/>
            <person name="Davidsen T.M."/>
            <person name="Zafar N."/>
            <person name="Zhou L."/>
            <person name="Liu J."/>
            <person name="Yuan Q."/>
            <person name="Khouri H.M."/>
            <person name="Fedorova N.B."/>
            <person name="Tran B."/>
            <person name="Russell D."/>
            <person name="Berry K.J."/>
            <person name="Utterback T.R."/>
            <person name="Van Aken S.E."/>
            <person name="Feldblyum T.V."/>
            <person name="D'Ascenzo M."/>
            <person name="Deng W.-L."/>
            <person name="Ramos A.R."/>
            <person name="Alfano J.R."/>
            <person name="Cartinhour S."/>
            <person name="Chatterjee A.K."/>
            <person name="Delaney T.P."/>
            <person name="Lazarowitz S.G."/>
            <person name="Martin G.B."/>
            <person name="Schneider D.J."/>
            <person name="Tang X."/>
            <person name="Bender C.L."/>
            <person name="White O."/>
            <person name="Fraser C.M."/>
            <person name="Collmer A."/>
        </authorList>
    </citation>
    <scope>NUCLEOTIDE SEQUENCE [LARGE SCALE GENOMIC DNA]</scope>
    <source>
        <strain>ATCC BAA-871 / DC3000</strain>
    </source>
</reference>
<evidence type="ECO:0000255" key="1">
    <source>
        <dbReference type="HAMAP-Rule" id="MF_01724"/>
    </source>
</evidence>
<protein>
    <recommendedName>
        <fullName evidence="1">Aliphatic sulfonates import ATP-binding protein SsuB 3</fullName>
        <ecNumber evidence="1">7.6.2.14</ecNumber>
    </recommendedName>
</protein>
<sequence>MTSLKQQPPHLLRGIPLAVQNLKKAFGTREVLKDIDLHIPAGQFVAIVGRSGCGKSTLLRLLAGLDKPTEGQLLAGSAPLDDAREDTRLMFQEARLLPWKKVIDNVGLGLGGNWRPQALEALEAVGLAERANEWPAALSGGQKQRVALARALIHKPRLLLLDEPLGALDALTRIEMQQLIEKLWGQYGFTVLLVTHDVSEAVAIADRVILIEEGQIGLDLLVDLPRPRARGSHRLAALEAEVLNRVLAIPGSPPDPEPFSPLPTQLSWAN</sequence>
<comment type="function">
    <text evidence="1">Part of the ABC transporter complex SsuABC involved in aliphatic sulfonates import. Responsible for energy coupling to the transport system.</text>
</comment>
<comment type="catalytic activity">
    <reaction evidence="1">
        <text>ATP + H2O + aliphatic sulfonate-[sulfonate-binding protein]Side 1 = ADP + phosphate + aliphatic sulfonateSide 2 + [sulfonate-binding protein]Side 1.</text>
        <dbReference type="EC" id="7.6.2.14"/>
    </reaction>
</comment>
<comment type="subunit">
    <text evidence="1">The complex is composed of two ATP-binding proteins (SsuB), two transmembrane proteins (SsuC) and a solute-binding protein (SsuA).</text>
</comment>
<comment type="subcellular location">
    <subcellularLocation>
        <location evidence="1">Cell inner membrane</location>
        <topology evidence="1">Peripheral membrane protein</topology>
    </subcellularLocation>
</comment>
<comment type="similarity">
    <text evidence="1">Belongs to the ABC transporter superfamily. Aliphatic sulfonates importer (TC 3.A.1.17.2) family.</text>
</comment>
<feature type="chain" id="PRO_0000279945" description="Aliphatic sulfonates import ATP-binding protein SsuB 3">
    <location>
        <begin position="1"/>
        <end position="270"/>
    </location>
</feature>
<feature type="domain" description="ABC transporter" evidence="1">
    <location>
        <begin position="17"/>
        <end position="238"/>
    </location>
</feature>
<feature type="binding site" evidence="1">
    <location>
        <begin position="49"/>
        <end position="56"/>
    </location>
    <ligand>
        <name>ATP</name>
        <dbReference type="ChEBI" id="CHEBI:30616"/>
    </ligand>
</feature>
<gene>
    <name evidence="1" type="primary">ssuB3</name>
    <name type="ordered locus">PSPTO_5314</name>
</gene>
<name>SSUB3_PSESM</name>
<proteinExistence type="inferred from homology"/>